<name>HSLV_ROSDO</name>
<organism>
    <name type="scientific">Roseobacter denitrificans (strain ATCC 33942 / OCh 114)</name>
    <name type="common">Erythrobacter sp. (strain OCh 114)</name>
    <name type="synonym">Roseobacter denitrificans</name>
    <dbReference type="NCBI Taxonomy" id="375451"/>
    <lineage>
        <taxon>Bacteria</taxon>
        <taxon>Pseudomonadati</taxon>
        <taxon>Pseudomonadota</taxon>
        <taxon>Alphaproteobacteria</taxon>
        <taxon>Rhodobacterales</taxon>
        <taxon>Roseobacteraceae</taxon>
        <taxon>Roseobacter</taxon>
    </lineage>
</organism>
<keyword id="KW-0021">Allosteric enzyme</keyword>
<keyword id="KW-0963">Cytoplasm</keyword>
<keyword id="KW-0378">Hydrolase</keyword>
<keyword id="KW-0479">Metal-binding</keyword>
<keyword id="KW-0645">Protease</keyword>
<keyword id="KW-1185">Reference proteome</keyword>
<keyword id="KW-0915">Sodium</keyword>
<keyword id="KW-0888">Threonine protease</keyword>
<proteinExistence type="inferred from homology"/>
<evidence type="ECO:0000255" key="1">
    <source>
        <dbReference type="HAMAP-Rule" id="MF_00248"/>
    </source>
</evidence>
<gene>
    <name evidence="1" type="primary">hslV</name>
    <name type="ordered locus">RD1_0450</name>
</gene>
<feature type="chain" id="PRO_0000336793" description="ATP-dependent protease subunit HslV">
    <location>
        <begin position="1"/>
        <end position="185"/>
    </location>
</feature>
<feature type="active site" evidence="1">
    <location>
        <position position="12"/>
    </location>
</feature>
<feature type="binding site" evidence="1">
    <location>
        <position position="168"/>
    </location>
    <ligand>
        <name>Na(+)</name>
        <dbReference type="ChEBI" id="CHEBI:29101"/>
    </ligand>
</feature>
<feature type="binding site" evidence="1">
    <location>
        <position position="171"/>
    </location>
    <ligand>
        <name>Na(+)</name>
        <dbReference type="ChEBI" id="CHEBI:29101"/>
    </ligand>
</feature>
<feature type="binding site" evidence="1">
    <location>
        <position position="174"/>
    </location>
    <ligand>
        <name>Na(+)</name>
        <dbReference type="ChEBI" id="CHEBI:29101"/>
    </ligand>
</feature>
<dbReference type="EC" id="3.4.25.2" evidence="1"/>
<dbReference type="EMBL" id="CP000362">
    <property type="protein sequence ID" value="ABG30163.1"/>
    <property type="molecule type" value="Genomic_DNA"/>
</dbReference>
<dbReference type="RefSeq" id="WP_011566785.1">
    <property type="nucleotide sequence ID" value="NC_008209.1"/>
</dbReference>
<dbReference type="SMR" id="Q16CY0"/>
<dbReference type="STRING" id="375451.RD1_0450"/>
<dbReference type="MEROPS" id="T01.006"/>
<dbReference type="KEGG" id="rde:RD1_0450"/>
<dbReference type="eggNOG" id="COG5405">
    <property type="taxonomic scope" value="Bacteria"/>
</dbReference>
<dbReference type="HOGENOM" id="CLU_093872_1_0_5"/>
<dbReference type="OrthoDB" id="9804884at2"/>
<dbReference type="Proteomes" id="UP000007029">
    <property type="component" value="Chromosome"/>
</dbReference>
<dbReference type="GO" id="GO:0009376">
    <property type="term" value="C:HslUV protease complex"/>
    <property type="evidence" value="ECO:0007669"/>
    <property type="project" value="UniProtKB-UniRule"/>
</dbReference>
<dbReference type="GO" id="GO:0005839">
    <property type="term" value="C:proteasome core complex"/>
    <property type="evidence" value="ECO:0007669"/>
    <property type="project" value="InterPro"/>
</dbReference>
<dbReference type="GO" id="GO:0046872">
    <property type="term" value="F:metal ion binding"/>
    <property type="evidence" value="ECO:0007669"/>
    <property type="project" value="UniProtKB-KW"/>
</dbReference>
<dbReference type="GO" id="GO:0004298">
    <property type="term" value="F:threonine-type endopeptidase activity"/>
    <property type="evidence" value="ECO:0007669"/>
    <property type="project" value="UniProtKB-KW"/>
</dbReference>
<dbReference type="GO" id="GO:0051603">
    <property type="term" value="P:proteolysis involved in protein catabolic process"/>
    <property type="evidence" value="ECO:0007669"/>
    <property type="project" value="InterPro"/>
</dbReference>
<dbReference type="CDD" id="cd01913">
    <property type="entry name" value="protease_HslV"/>
    <property type="match status" value="1"/>
</dbReference>
<dbReference type="Gene3D" id="3.60.20.10">
    <property type="entry name" value="Glutamine Phosphoribosylpyrophosphate, subunit 1, domain 1"/>
    <property type="match status" value="1"/>
</dbReference>
<dbReference type="HAMAP" id="MF_00248">
    <property type="entry name" value="HslV"/>
    <property type="match status" value="1"/>
</dbReference>
<dbReference type="InterPro" id="IPR022281">
    <property type="entry name" value="ATP-dep_Prtase_HsIV_su"/>
</dbReference>
<dbReference type="InterPro" id="IPR029055">
    <property type="entry name" value="Ntn_hydrolases_N"/>
</dbReference>
<dbReference type="InterPro" id="IPR001353">
    <property type="entry name" value="Proteasome_sua/b"/>
</dbReference>
<dbReference type="InterPro" id="IPR023333">
    <property type="entry name" value="Proteasome_suB-type"/>
</dbReference>
<dbReference type="NCBIfam" id="TIGR03692">
    <property type="entry name" value="ATP_dep_HslV"/>
    <property type="match status" value="1"/>
</dbReference>
<dbReference type="NCBIfam" id="NF003964">
    <property type="entry name" value="PRK05456.1"/>
    <property type="match status" value="1"/>
</dbReference>
<dbReference type="PANTHER" id="PTHR32194:SF7">
    <property type="entry name" value="ATP-DEPENDENT PROTEASE SUBUNIT HSLV"/>
    <property type="match status" value="1"/>
</dbReference>
<dbReference type="PANTHER" id="PTHR32194">
    <property type="entry name" value="METALLOPROTEASE TLDD"/>
    <property type="match status" value="1"/>
</dbReference>
<dbReference type="Pfam" id="PF00227">
    <property type="entry name" value="Proteasome"/>
    <property type="match status" value="1"/>
</dbReference>
<dbReference type="PIRSF" id="PIRSF039093">
    <property type="entry name" value="HslV"/>
    <property type="match status" value="1"/>
</dbReference>
<dbReference type="SUPFAM" id="SSF56235">
    <property type="entry name" value="N-terminal nucleophile aminohydrolases (Ntn hydrolases)"/>
    <property type="match status" value="1"/>
</dbReference>
<dbReference type="PROSITE" id="PS51476">
    <property type="entry name" value="PROTEASOME_BETA_2"/>
    <property type="match status" value="1"/>
</dbReference>
<sequence>MARDEFPGWHGTTIIGVKKGGEVVIAGDGQVSLGQTVIKGTARKVRRLSPGGFDVVAGFAGSTADAFTLLERLEAKLEATPGQLARASVELAKDWRTDKYLQKLEAMLIVSDGKDIFVITGAGDVLEPEHDVTAIGSGGNYALAAARGMMDSPRSAEEVARDAMAIAADICVYTNGNLTVETISA</sequence>
<comment type="function">
    <text evidence="1">Protease subunit of a proteasome-like degradation complex believed to be a general protein degrading machinery.</text>
</comment>
<comment type="catalytic activity">
    <reaction evidence="1">
        <text>ATP-dependent cleavage of peptide bonds with broad specificity.</text>
        <dbReference type="EC" id="3.4.25.2"/>
    </reaction>
</comment>
<comment type="activity regulation">
    <text evidence="1">Allosterically activated by HslU binding.</text>
</comment>
<comment type="subunit">
    <text evidence="1">A double ring-shaped homohexamer of HslV is capped on each side by a ring-shaped HslU homohexamer. The assembly of the HslU/HslV complex is dependent on binding of ATP.</text>
</comment>
<comment type="subcellular location">
    <subcellularLocation>
        <location evidence="1">Cytoplasm</location>
    </subcellularLocation>
</comment>
<comment type="similarity">
    <text evidence="1">Belongs to the peptidase T1B family. HslV subfamily.</text>
</comment>
<accession>Q16CY0</accession>
<protein>
    <recommendedName>
        <fullName evidence="1">ATP-dependent protease subunit HslV</fullName>
        <ecNumber evidence="1">3.4.25.2</ecNumber>
    </recommendedName>
</protein>
<reference key="1">
    <citation type="journal article" date="2007" name="J. Bacteriol.">
        <title>The complete genome sequence of Roseobacter denitrificans reveals a mixotrophic rather than photosynthetic metabolism.</title>
        <authorList>
            <person name="Swingley W.D."/>
            <person name="Sadekar S."/>
            <person name="Mastrian S.D."/>
            <person name="Matthies H.J."/>
            <person name="Hao J."/>
            <person name="Ramos H."/>
            <person name="Acharya C.R."/>
            <person name="Conrad A.L."/>
            <person name="Taylor H.L."/>
            <person name="Dejesa L.C."/>
            <person name="Shah M.K."/>
            <person name="O'Huallachain M.E."/>
            <person name="Lince M.T."/>
            <person name="Blankenship R.E."/>
            <person name="Beatty J.T."/>
            <person name="Touchman J.W."/>
        </authorList>
    </citation>
    <scope>NUCLEOTIDE SEQUENCE [LARGE SCALE GENOMIC DNA]</scope>
    <source>
        <strain>ATCC 33942 / OCh 114</strain>
    </source>
</reference>